<gene>
    <name evidence="1" type="primary">ligA</name>
    <name type="ordered locus">Nwi_1062</name>
</gene>
<dbReference type="EC" id="6.5.1.2" evidence="1"/>
<dbReference type="EMBL" id="CP000115">
    <property type="protein sequence ID" value="ABA04324.1"/>
    <property type="molecule type" value="Genomic_DNA"/>
</dbReference>
<dbReference type="RefSeq" id="WP_011314358.1">
    <property type="nucleotide sequence ID" value="NC_007406.1"/>
</dbReference>
<dbReference type="SMR" id="Q3STR7"/>
<dbReference type="STRING" id="323098.Nwi_1062"/>
<dbReference type="KEGG" id="nwi:Nwi_1062"/>
<dbReference type="eggNOG" id="COG0272">
    <property type="taxonomic scope" value="Bacteria"/>
</dbReference>
<dbReference type="HOGENOM" id="CLU_007764_2_1_5"/>
<dbReference type="OrthoDB" id="9759736at2"/>
<dbReference type="Proteomes" id="UP000002531">
    <property type="component" value="Chromosome"/>
</dbReference>
<dbReference type="GO" id="GO:0005829">
    <property type="term" value="C:cytosol"/>
    <property type="evidence" value="ECO:0007669"/>
    <property type="project" value="TreeGrafter"/>
</dbReference>
<dbReference type="GO" id="GO:0003911">
    <property type="term" value="F:DNA ligase (NAD+) activity"/>
    <property type="evidence" value="ECO:0007669"/>
    <property type="project" value="UniProtKB-UniRule"/>
</dbReference>
<dbReference type="GO" id="GO:0046872">
    <property type="term" value="F:metal ion binding"/>
    <property type="evidence" value="ECO:0007669"/>
    <property type="project" value="UniProtKB-KW"/>
</dbReference>
<dbReference type="GO" id="GO:0006281">
    <property type="term" value="P:DNA repair"/>
    <property type="evidence" value="ECO:0007669"/>
    <property type="project" value="UniProtKB-KW"/>
</dbReference>
<dbReference type="GO" id="GO:0006260">
    <property type="term" value="P:DNA replication"/>
    <property type="evidence" value="ECO:0007669"/>
    <property type="project" value="UniProtKB-KW"/>
</dbReference>
<dbReference type="CDD" id="cd17748">
    <property type="entry name" value="BRCT_DNA_ligase_like"/>
    <property type="match status" value="1"/>
</dbReference>
<dbReference type="CDD" id="cd00114">
    <property type="entry name" value="LIGANc"/>
    <property type="match status" value="1"/>
</dbReference>
<dbReference type="FunFam" id="3.30.470.30:FF:000001">
    <property type="entry name" value="DNA ligase"/>
    <property type="match status" value="1"/>
</dbReference>
<dbReference type="Gene3D" id="6.20.10.30">
    <property type="match status" value="1"/>
</dbReference>
<dbReference type="Gene3D" id="1.10.150.20">
    <property type="entry name" value="5' to 3' exonuclease, C-terminal subdomain"/>
    <property type="match status" value="2"/>
</dbReference>
<dbReference type="Gene3D" id="3.40.50.10190">
    <property type="entry name" value="BRCT domain"/>
    <property type="match status" value="1"/>
</dbReference>
<dbReference type="Gene3D" id="3.30.470.30">
    <property type="entry name" value="DNA ligase/mRNA capping enzyme"/>
    <property type="match status" value="1"/>
</dbReference>
<dbReference type="Gene3D" id="1.10.287.610">
    <property type="entry name" value="Helix hairpin bin"/>
    <property type="match status" value="1"/>
</dbReference>
<dbReference type="Gene3D" id="2.40.50.140">
    <property type="entry name" value="Nucleic acid-binding proteins"/>
    <property type="match status" value="1"/>
</dbReference>
<dbReference type="HAMAP" id="MF_01588">
    <property type="entry name" value="DNA_ligase_A"/>
    <property type="match status" value="1"/>
</dbReference>
<dbReference type="InterPro" id="IPR001357">
    <property type="entry name" value="BRCT_dom"/>
</dbReference>
<dbReference type="InterPro" id="IPR036420">
    <property type="entry name" value="BRCT_dom_sf"/>
</dbReference>
<dbReference type="InterPro" id="IPR041663">
    <property type="entry name" value="DisA/LigA_HHH"/>
</dbReference>
<dbReference type="InterPro" id="IPR001679">
    <property type="entry name" value="DNA_ligase"/>
</dbReference>
<dbReference type="InterPro" id="IPR018239">
    <property type="entry name" value="DNA_ligase_AS"/>
</dbReference>
<dbReference type="InterPro" id="IPR033136">
    <property type="entry name" value="DNA_ligase_CS"/>
</dbReference>
<dbReference type="InterPro" id="IPR013839">
    <property type="entry name" value="DNAligase_adenylation"/>
</dbReference>
<dbReference type="InterPro" id="IPR013840">
    <property type="entry name" value="DNAligase_N"/>
</dbReference>
<dbReference type="InterPro" id="IPR012340">
    <property type="entry name" value="NA-bd_OB-fold"/>
</dbReference>
<dbReference type="InterPro" id="IPR004150">
    <property type="entry name" value="NAD_DNA_ligase_OB"/>
</dbReference>
<dbReference type="InterPro" id="IPR010994">
    <property type="entry name" value="RuvA_2-like"/>
</dbReference>
<dbReference type="InterPro" id="IPR004149">
    <property type="entry name" value="Znf_DNAligase_C4"/>
</dbReference>
<dbReference type="NCBIfam" id="TIGR00575">
    <property type="entry name" value="dnlj"/>
    <property type="match status" value="1"/>
</dbReference>
<dbReference type="NCBIfam" id="NF005932">
    <property type="entry name" value="PRK07956.1"/>
    <property type="match status" value="1"/>
</dbReference>
<dbReference type="PANTHER" id="PTHR23389">
    <property type="entry name" value="CHROMOSOME TRANSMISSION FIDELITY FACTOR 18"/>
    <property type="match status" value="1"/>
</dbReference>
<dbReference type="PANTHER" id="PTHR23389:SF9">
    <property type="entry name" value="DNA LIGASE"/>
    <property type="match status" value="1"/>
</dbReference>
<dbReference type="Pfam" id="PF00533">
    <property type="entry name" value="BRCT"/>
    <property type="match status" value="1"/>
</dbReference>
<dbReference type="Pfam" id="PF01653">
    <property type="entry name" value="DNA_ligase_aden"/>
    <property type="match status" value="1"/>
</dbReference>
<dbReference type="Pfam" id="PF03120">
    <property type="entry name" value="DNA_ligase_OB"/>
    <property type="match status" value="1"/>
</dbReference>
<dbReference type="Pfam" id="PF03119">
    <property type="entry name" value="DNA_ligase_ZBD"/>
    <property type="match status" value="1"/>
</dbReference>
<dbReference type="Pfam" id="PF12826">
    <property type="entry name" value="HHH_2"/>
    <property type="match status" value="1"/>
</dbReference>
<dbReference type="PIRSF" id="PIRSF001604">
    <property type="entry name" value="LigA"/>
    <property type="match status" value="1"/>
</dbReference>
<dbReference type="SMART" id="SM00292">
    <property type="entry name" value="BRCT"/>
    <property type="match status" value="1"/>
</dbReference>
<dbReference type="SMART" id="SM00532">
    <property type="entry name" value="LIGANc"/>
    <property type="match status" value="1"/>
</dbReference>
<dbReference type="SUPFAM" id="SSF52113">
    <property type="entry name" value="BRCT domain"/>
    <property type="match status" value="1"/>
</dbReference>
<dbReference type="SUPFAM" id="SSF56091">
    <property type="entry name" value="DNA ligase/mRNA capping enzyme, catalytic domain"/>
    <property type="match status" value="1"/>
</dbReference>
<dbReference type="SUPFAM" id="SSF50249">
    <property type="entry name" value="Nucleic acid-binding proteins"/>
    <property type="match status" value="1"/>
</dbReference>
<dbReference type="SUPFAM" id="SSF47781">
    <property type="entry name" value="RuvA domain 2-like"/>
    <property type="match status" value="1"/>
</dbReference>
<dbReference type="PROSITE" id="PS50172">
    <property type="entry name" value="BRCT"/>
    <property type="match status" value="1"/>
</dbReference>
<dbReference type="PROSITE" id="PS01055">
    <property type="entry name" value="DNA_LIGASE_N1"/>
    <property type="match status" value="1"/>
</dbReference>
<dbReference type="PROSITE" id="PS01056">
    <property type="entry name" value="DNA_LIGASE_N2"/>
    <property type="match status" value="1"/>
</dbReference>
<protein>
    <recommendedName>
        <fullName evidence="1">DNA ligase</fullName>
        <ecNumber evidence="1">6.5.1.2</ecNumber>
    </recommendedName>
    <alternativeName>
        <fullName evidence="1">Polydeoxyribonucleotide synthase [NAD(+)]</fullName>
    </alternativeName>
</protein>
<accession>Q3STR7</accession>
<feature type="chain" id="PRO_0000313337" description="DNA ligase">
    <location>
        <begin position="1"/>
        <end position="716"/>
    </location>
</feature>
<feature type="domain" description="BRCT" evidence="1">
    <location>
        <begin position="638"/>
        <end position="716"/>
    </location>
</feature>
<feature type="active site" description="N6-AMP-lysine intermediate" evidence="1">
    <location>
        <position position="132"/>
    </location>
</feature>
<feature type="binding site" evidence="1">
    <location>
        <begin position="47"/>
        <end position="51"/>
    </location>
    <ligand>
        <name>NAD(+)</name>
        <dbReference type="ChEBI" id="CHEBI:57540"/>
    </ligand>
</feature>
<feature type="binding site" evidence="1">
    <location>
        <begin position="96"/>
        <end position="97"/>
    </location>
    <ligand>
        <name>NAD(+)</name>
        <dbReference type="ChEBI" id="CHEBI:57540"/>
    </ligand>
</feature>
<feature type="binding site" evidence="1">
    <location>
        <position position="130"/>
    </location>
    <ligand>
        <name>NAD(+)</name>
        <dbReference type="ChEBI" id="CHEBI:57540"/>
    </ligand>
</feature>
<feature type="binding site" evidence="1">
    <location>
        <position position="153"/>
    </location>
    <ligand>
        <name>NAD(+)</name>
        <dbReference type="ChEBI" id="CHEBI:57540"/>
    </ligand>
</feature>
<feature type="binding site" evidence="1">
    <location>
        <position position="190"/>
    </location>
    <ligand>
        <name>NAD(+)</name>
        <dbReference type="ChEBI" id="CHEBI:57540"/>
    </ligand>
</feature>
<feature type="binding site" evidence="1">
    <location>
        <position position="306"/>
    </location>
    <ligand>
        <name>NAD(+)</name>
        <dbReference type="ChEBI" id="CHEBI:57540"/>
    </ligand>
</feature>
<feature type="binding site" evidence="1">
    <location>
        <position position="330"/>
    </location>
    <ligand>
        <name>NAD(+)</name>
        <dbReference type="ChEBI" id="CHEBI:57540"/>
    </ligand>
</feature>
<feature type="binding site" evidence="1">
    <location>
        <position position="435"/>
    </location>
    <ligand>
        <name>Zn(2+)</name>
        <dbReference type="ChEBI" id="CHEBI:29105"/>
    </ligand>
</feature>
<feature type="binding site" evidence="1">
    <location>
        <position position="438"/>
    </location>
    <ligand>
        <name>Zn(2+)</name>
        <dbReference type="ChEBI" id="CHEBI:29105"/>
    </ligand>
</feature>
<feature type="binding site" evidence="1">
    <location>
        <position position="453"/>
    </location>
    <ligand>
        <name>Zn(2+)</name>
        <dbReference type="ChEBI" id="CHEBI:29105"/>
    </ligand>
</feature>
<feature type="binding site" evidence="1">
    <location>
        <position position="459"/>
    </location>
    <ligand>
        <name>Zn(2+)</name>
        <dbReference type="ChEBI" id="CHEBI:29105"/>
    </ligand>
</feature>
<sequence>MAAKSKTPPPVDSLTRSQARVEHKRLALEIETHNERYYQQDAPTVSDATYDALQRRLEAIEARFPDLVTASSPTQTVGAAPARGFAKVQHAVPMLSLGNAFSDAEVAEFVERIRRFLKLGADDMPAIVAEPKIDGLSLSLRYENGDLVRAATRGDGFTGEDVTANVRTIADVPHKLNGHNIPTACELRGEVYMLKEDFLALNKKQQEAGDTVFANPRNSAAGSLRQKDVSITASRPLKFFAYAWGEMTDRPAETQNDMLEWLRDVGFIVNPLIQLCHSVDEVLAFYRRIGEQRATLGYDIDGVVYKVDRLDWQERLGFVSRSPRWAIAHKFAAEQAMTILRGIDIQVGRTGAMTPVARLEPVTVGGVVVQNATLHNEDYIRGLGNDGQPIRDGIDLRIGDTVVVQRAGDVIPQVVSVIIEKRPANAKRYEFPDRCPICGSHAVREEGEAVRRCTGALICPAQAVERLKHFVSRLAFDIDGLGEKQIQEFYDDGLVMHPVDIFTLQERDARAENKLRDRDGYGDVSVRNLFAAIDARRRIELNRLIFALGIRHVGEGNAKLLARHYGSIESFRSAMTEAAAAQTEAGNDSEAYADLTNIGGIGDIVADAVVEFFAEPRNVKALNDLLEEIEVLPVAQARSDSAVAGKTVVFTGSLEKFTRDEAKASAERVGAKTSSSVSKKTDLVVAGPGAGSKLKDAEKFGVKVISEDEWLKLIEG</sequence>
<organism>
    <name type="scientific">Nitrobacter winogradskyi (strain ATCC 25391 / DSM 10237 / CIP 104748 / NCIMB 11846 / Nb-255)</name>
    <dbReference type="NCBI Taxonomy" id="323098"/>
    <lineage>
        <taxon>Bacteria</taxon>
        <taxon>Pseudomonadati</taxon>
        <taxon>Pseudomonadota</taxon>
        <taxon>Alphaproteobacteria</taxon>
        <taxon>Hyphomicrobiales</taxon>
        <taxon>Nitrobacteraceae</taxon>
        <taxon>Nitrobacter</taxon>
    </lineage>
</organism>
<proteinExistence type="inferred from homology"/>
<name>DNLJ_NITWN</name>
<evidence type="ECO:0000255" key="1">
    <source>
        <dbReference type="HAMAP-Rule" id="MF_01588"/>
    </source>
</evidence>
<reference key="1">
    <citation type="journal article" date="2006" name="Appl. Environ. Microbiol.">
        <title>Genome sequence of the chemolithoautotrophic nitrite-oxidizing bacterium Nitrobacter winogradskyi Nb-255.</title>
        <authorList>
            <person name="Starkenburg S.R."/>
            <person name="Chain P.S.G."/>
            <person name="Sayavedra-Soto L.A."/>
            <person name="Hauser L."/>
            <person name="Land M.L."/>
            <person name="Larimer F.W."/>
            <person name="Malfatti S.A."/>
            <person name="Klotz M.G."/>
            <person name="Bottomley P.J."/>
            <person name="Arp D.J."/>
            <person name="Hickey W.J."/>
        </authorList>
    </citation>
    <scope>NUCLEOTIDE SEQUENCE [LARGE SCALE GENOMIC DNA]</scope>
    <source>
        <strain>ATCC 25391 / DSM 10237 / CIP 104748 / NCIMB 11846 / Nb-255</strain>
    </source>
</reference>
<comment type="function">
    <text evidence="1">DNA ligase that catalyzes the formation of phosphodiester linkages between 5'-phosphoryl and 3'-hydroxyl groups in double-stranded DNA using NAD as a coenzyme and as the energy source for the reaction. It is essential for DNA replication and repair of damaged DNA.</text>
</comment>
<comment type="catalytic activity">
    <reaction evidence="1">
        <text>NAD(+) + (deoxyribonucleotide)n-3'-hydroxyl + 5'-phospho-(deoxyribonucleotide)m = (deoxyribonucleotide)n+m + AMP + beta-nicotinamide D-nucleotide.</text>
        <dbReference type="EC" id="6.5.1.2"/>
    </reaction>
</comment>
<comment type="cofactor">
    <cofactor evidence="1">
        <name>Mg(2+)</name>
        <dbReference type="ChEBI" id="CHEBI:18420"/>
    </cofactor>
    <cofactor evidence="1">
        <name>Mn(2+)</name>
        <dbReference type="ChEBI" id="CHEBI:29035"/>
    </cofactor>
</comment>
<comment type="similarity">
    <text evidence="1">Belongs to the NAD-dependent DNA ligase family. LigA subfamily.</text>
</comment>
<keyword id="KW-0227">DNA damage</keyword>
<keyword id="KW-0234">DNA repair</keyword>
<keyword id="KW-0235">DNA replication</keyword>
<keyword id="KW-0436">Ligase</keyword>
<keyword id="KW-0460">Magnesium</keyword>
<keyword id="KW-0464">Manganese</keyword>
<keyword id="KW-0479">Metal-binding</keyword>
<keyword id="KW-0520">NAD</keyword>
<keyword id="KW-1185">Reference proteome</keyword>
<keyword id="KW-0862">Zinc</keyword>